<protein>
    <recommendedName>
        <fullName>Uncharacterized protein YkfA</fullName>
    </recommendedName>
</protein>
<dbReference type="EMBL" id="U70214">
    <property type="protein sequence ID" value="AAB08672.1"/>
    <property type="molecule type" value="Genomic_DNA"/>
</dbReference>
<dbReference type="EMBL" id="U00096">
    <property type="protein sequence ID" value="AAC73356.2"/>
    <property type="molecule type" value="Genomic_DNA"/>
</dbReference>
<dbReference type="EMBL" id="AP009048">
    <property type="protein sequence ID" value="BAA77923.2"/>
    <property type="molecule type" value="Genomic_DNA"/>
</dbReference>
<dbReference type="PIR" id="E64750">
    <property type="entry name" value="E64750"/>
</dbReference>
<dbReference type="RefSeq" id="NP_414787.4">
    <property type="nucleotide sequence ID" value="NC_000913.3"/>
</dbReference>
<dbReference type="RefSeq" id="WP_001065553.1">
    <property type="nucleotide sequence ID" value="NZ_LN832404.1"/>
</dbReference>
<dbReference type="SMR" id="P75678"/>
<dbReference type="BioGRID" id="4262798">
    <property type="interactions" value="14"/>
</dbReference>
<dbReference type="FunCoup" id="P75678">
    <property type="interactions" value="46"/>
</dbReference>
<dbReference type="IntAct" id="P75678">
    <property type="interactions" value="1"/>
</dbReference>
<dbReference type="STRING" id="511145.b0253"/>
<dbReference type="PaxDb" id="511145-b0253"/>
<dbReference type="EnsemblBacteria" id="AAC73356">
    <property type="protein sequence ID" value="AAC73356"/>
    <property type="gene ID" value="b0253"/>
</dbReference>
<dbReference type="GeneID" id="949004"/>
<dbReference type="KEGG" id="ecj:JW0243"/>
<dbReference type="KEGG" id="eco:b0253"/>
<dbReference type="KEGG" id="ecoc:C3026_01210"/>
<dbReference type="KEGG" id="ecoc:C3026_23945"/>
<dbReference type="PATRIC" id="fig|511145.12.peg.256"/>
<dbReference type="EchoBASE" id="EB3123"/>
<dbReference type="eggNOG" id="COG3596">
    <property type="taxonomic scope" value="Bacteria"/>
</dbReference>
<dbReference type="HOGENOM" id="CLU_059925_0_0_6"/>
<dbReference type="InParanoid" id="P75678"/>
<dbReference type="OMA" id="AVWDWIF"/>
<dbReference type="OrthoDB" id="9779790at2"/>
<dbReference type="PhylomeDB" id="P75678"/>
<dbReference type="BioCyc" id="EcoCyc:G6128-MONOMER"/>
<dbReference type="PRO" id="PR:P75678"/>
<dbReference type="Proteomes" id="UP000000625">
    <property type="component" value="Chromosome"/>
</dbReference>
<dbReference type="GO" id="GO:0005737">
    <property type="term" value="C:cytoplasm"/>
    <property type="evidence" value="ECO:0000318"/>
    <property type="project" value="GO_Central"/>
</dbReference>
<dbReference type="GO" id="GO:0005829">
    <property type="term" value="C:cytosol"/>
    <property type="evidence" value="ECO:0000318"/>
    <property type="project" value="GO_Central"/>
</dbReference>
<dbReference type="GO" id="GO:0005525">
    <property type="term" value="F:GTP binding"/>
    <property type="evidence" value="ECO:0007669"/>
    <property type="project" value="UniProtKB-KW"/>
</dbReference>
<dbReference type="GO" id="GO:0030488">
    <property type="term" value="P:tRNA methylation"/>
    <property type="evidence" value="ECO:0000318"/>
    <property type="project" value="GO_Central"/>
</dbReference>
<dbReference type="GO" id="GO:0002098">
    <property type="term" value="P:tRNA wobble uridine modification"/>
    <property type="evidence" value="ECO:0000318"/>
    <property type="project" value="GO_Central"/>
</dbReference>
<dbReference type="CDD" id="cd11383">
    <property type="entry name" value="YfjP"/>
    <property type="match status" value="1"/>
</dbReference>
<dbReference type="Gene3D" id="3.40.50.300">
    <property type="entry name" value="P-loop containing nucleotide triphosphate hydrolases"/>
    <property type="match status" value="1"/>
</dbReference>
<dbReference type="InterPro" id="IPR006073">
    <property type="entry name" value="GTP-bd"/>
</dbReference>
<dbReference type="InterPro" id="IPR027417">
    <property type="entry name" value="P-loop_NTPase"/>
</dbReference>
<dbReference type="PANTHER" id="PTHR42714">
    <property type="entry name" value="TRNA MODIFICATION GTPASE GTPBP3"/>
    <property type="match status" value="1"/>
</dbReference>
<dbReference type="PANTHER" id="PTHR42714:SF2">
    <property type="entry name" value="TRNA MODIFICATION GTPASE GTPBP3, MITOCHONDRIAL"/>
    <property type="match status" value="1"/>
</dbReference>
<dbReference type="Pfam" id="PF01926">
    <property type="entry name" value="MMR_HSR1"/>
    <property type="match status" value="1"/>
</dbReference>
<dbReference type="SUPFAM" id="SSF52540">
    <property type="entry name" value="P-loop containing nucleoside triphosphate hydrolases"/>
    <property type="match status" value="1"/>
</dbReference>
<reference key="1">
    <citation type="submission" date="1996-02" db="EMBL/GenBank/DDBJ databases">
        <title>Systematic sequencing of the Escherichia coli genome: analysis of the 4.0 - 6.0 min (189,987 - 281,416bp) region.</title>
        <authorList>
            <person name="Takemoto K."/>
            <person name="Mori H."/>
            <person name="Murayama N."/>
            <person name="Kataoka K."/>
            <person name="Yano M."/>
            <person name="Itoh T."/>
            <person name="Yamamoto Y."/>
            <person name="Inokuchi H."/>
            <person name="Miki T."/>
            <person name="Hatada E."/>
            <person name="Fukuda R."/>
            <person name="Ichihara S."/>
            <person name="Mizuno T."/>
            <person name="Makino K."/>
            <person name="Nakata A."/>
            <person name="Yura T."/>
            <person name="Sampei G."/>
            <person name="Mizobuchi K."/>
        </authorList>
    </citation>
    <scope>NUCLEOTIDE SEQUENCE [LARGE SCALE GENOMIC DNA]</scope>
    <source>
        <strain>K12 / W3110 / ATCC 27325 / DSM 5911</strain>
    </source>
</reference>
<reference key="2">
    <citation type="submission" date="1997-01" db="EMBL/GenBank/DDBJ databases">
        <title>Sequence of minutes 4-25 of Escherichia coli.</title>
        <authorList>
            <person name="Chung E."/>
            <person name="Allen E."/>
            <person name="Araujo R."/>
            <person name="Aparicio A.M."/>
            <person name="Davis K."/>
            <person name="Duncan M."/>
            <person name="Federspiel N."/>
            <person name="Hyman R."/>
            <person name="Kalman S."/>
            <person name="Komp C."/>
            <person name="Kurdi O."/>
            <person name="Lew H."/>
            <person name="Lin D."/>
            <person name="Namath A."/>
            <person name="Oefner P."/>
            <person name="Roberts D."/>
            <person name="Schramm S."/>
            <person name="Davis R.W."/>
        </authorList>
    </citation>
    <scope>NUCLEOTIDE SEQUENCE [LARGE SCALE GENOMIC DNA]</scope>
    <source>
        <strain>K12 / MG1655 / ATCC 47076</strain>
    </source>
</reference>
<reference key="3">
    <citation type="journal article" date="1997" name="Science">
        <title>The complete genome sequence of Escherichia coli K-12.</title>
        <authorList>
            <person name="Blattner F.R."/>
            <person name="Plunkett G. III"/>
            <person name="Bloch C.A."/>
            <person name="Perna N.T."/>
            <person name="Burland V."/>
            <person name="Riley M."/>
            <person name="Collado-Vides J."/>
            <person name="Glasner J.D."/>
            <person name="Rode C.K."/>
            <person name="Mayhew G.F."/>
            <person name="Gregor J."/>
            <person name="Davis N.W."/>
            <person name="Kirkpatrick H.A."/>
            <person name="Goeden M.A."/>
            <person name="Rose D.J."/>
            <person name="Mau B."/>
            <person name="Shao Y."/>
        </authorList>
    </citation>
    <scope>NUCLEOTIDE SEQUENCE [LARGE SCALE GENOMIC DNA]</scope>
    <source>
        <strain>K12 / MG1655 / ATCC 47076</strain>
    </source>
</reference>
<reference key="4">
    <citation type="journal article" date="2006" name="Mol. Syst. Biol.">
        <title>Highly accurate genome sequences of Escherichia coli K-12 strains MG1655 and W3110.</title>
        <authorList>
            <person name="Hayashi K."/>
            <person name="Morooka N."/>
            <person name="Yamamoto Y."/>
            <person name="Fujita K."/>
            <person name="Isono K."/>
            <person name="Choi S."/>
            <person name="Ohtsubo E."/>
            <person name="Baba T."/>
            <person name="Wanner B.L."/>
            <person name="Mori H."/>
            <person name="Horiuchi T."/>
        </authorList>
    </citation>
    <scope>NUCLEOTIDE SEQUENCE [LARGE SCALE GENOMIC DNA]</scope>
    <scope>SEQUENCE REVISION TO 143-144 AND 165-287</scope>
    <source>
        <strain>K12 / W3110 / ATCC 27325 / DSM 5911</strain>
    </source>
</reference>
<feature type="chain" id="PRO_0000168547" description="Uncharacterized protein YkfA">
    <location>
        <begin position="1"/>
        <end position="287"/>
    </location>
</feature>
<feature type="domain" description="G">
    <location>
        <begin position="48"/>
        <end position="138"/>
    </location>
</feature>
<feature type="binding site" evidence="1">
    <location>
        <begin position="43"/>
        <end position="50"/>
    </location>
    <ligand>
        <name>GTP</name>
        <dbReference type="ChEBI" id="CHEBI:37565"/>
    </ligand>
</feature>
<feature type="binding site" evidence="1">
    <location>
        <begin position="90"/>
        <end position="93"/>
    </location>
    <ligand>
        <name>GTP</name>
        <dbReference type="ChEBI" id="CHEBI:37565"/>
    </ligand>
</feature>
<feature type="binding site" evidence="1">
    <location>
        <begin position="156"/>
        <end position="159"/>
    </location>
    <ligand>
        <name>GTP</name>
        <dbReference type="ChEBI" id="CHEBI:37565"/>
    </ligand>
</feature>
<comment type="similarity">
    <text evidence="2">To E.coli YfjP and YeeP.</text>
</comment>
<gene>
    <name type="primary">ykfA</name>
    <name type="ordered locus">b0253</name>
    <name type="ordered locus">JW0243</name>
</gene>
<keyword id="KW-0342">GTP-binding</keyword>
<keyword id="KW-0547">Nucleotide-binding</keyword>
<keyword id="KW-1185">Reference proteome</keyword>
<name>YKFA_ECOLI</name>
<organism>
    <name type="scientific">Escherichia coli (strain K12)</name>
    <dbReference type="NCBI Taxonomy" id="83333"/>
    <lineage>
        <taxon>Bacteria</taxon>
        <taxon>Pseudomonadati</taxon>
        <taxon>Pseudomonadota</taxon>
        <taxon>Gammaproteobacteria</taxon>
        <taxon>Enterobacterales</taxon>
        <taxon>Enterobacteriaceae</taxon>
        <taxon>Escherichia</taxon>
    </lineage>
</organism>
<sequence length="287" mass="31892">MNNSEGLKSFQQSLADLPQWVSERLLQQINQLTNYEPVIGIMGKTGVGKSSLCNALFAGDISPVSDVAACTREPLRFRLQVGDRYITLMDLPGVGESGARDTEYAALYREQLPRLDLVLWLIKADDRALTVDEHFYHQVIGEVYRHKVLFVISQSDKAEPTSGGGQLSTAQKQNISRKICLLHELFQPVHPVCAVSVRLQWGLKVMAERMIKCLPREATSPVVSQLHPSFRTTVVREQARSDFGETVGAVLDSISAFPLIPAPVRAVIQAVRTTVVSVARAVWDFFF</sequence>
<accession>P75678</accession>
<accession>P71287</accession>
<accession>Q47687</accession>
<proteinExistence type="predicted"/>
<evidence type="ECO:0000255" key="1"/>
<evidence type="ECO:0000305" key="2"/>